<evidence type="ECO:0000250" key="1">
    <source>
        <dbReference type="UniProtKB" id="P00415"/>
    </source>
</evidence>
<evidence type="ECO:0000250" key="2">
    <source>
        <dbReference type="UniProtKB" id="P00420"/>
    </source>
</evidence>
<evidence type="ECO:0000305" key="3"/>
<accession>O47694</accession>
<gene>
    <name type="primary">MT-CO3</name>
    <name type="synonym">COIII</name>
    <name type="synonym">COXIII</name>
    <name type="synonym">MTCO3</name>
</gene>
<proteinExistence type="inferred from homology"/>
<name>COX3_DAMLU</name>
<geneLocation type="mitochondrion"/>
<dbReference type="EC" id="7.1.1.9"/>
<dbReference type="EMBL" id="AF030459">
    <property type="protein sequence ID" value="AAB93598.1"/>
    <property type="molecule type" value="Genomic_DNA"/>
</dbReference>
<dbReference type="SMR" id="O47694"/>
<dbReference type="GO" id="GO:0005743">
    <property type="term" value="C:mitochondrial inner membrane"/>
    <property type="evidence" value="ECO:0007669"/>
    <property type="project" value="UniProtKB-SubCell"/>
</dbReference>
<dbReference type="GO" id="GO:0045277">
    <property type="term" value="C:respiratory chain complex IV"/>
    <property type="evidence" value="ECO:0000250"/>
    <property type="project" value="UniProtKB"/>
</dbReference>
<dbReference type="GO" id="GO:0004129">
    <property type="term" value="F:cytochrome-c oxidase activity"/>
    <property type="evidence" value="ECO:0007669"/>
    <property type="project" value="UniProtKB-EC"/>
</dbReference>
<dbReference type="GO" id="GO:0006123">
    <property type="term" value="P:mitochondrial electron transport, cytochrome c to oxygen"/>
    <property type="evidence" value="ECO:0007669"/>
    <property type="project" value="TreeGrafter"/>
</dbReference>
<dbReference type="GO" id="GO:0008535">
    <property type="term" value="P:respiratory chain complex IV assembly"/>
    <property type="evidence" value="ECO:0000250"/>
    <property type="project" value="UniProtKB"/>
</dbReference>
<dbReference type="CDD" id="cd01665">
    <property type="entry name" value="Cyt_c_Oxidase_III"/>
    <property type="match status" value="1"/>
</dbReference>
<dbReference type="FunFam" id="1.10.287.70:FF:000048">
    <property type="entry name" value="Cytochrome c oxidase subunit 3"/>
    <property type="match status" value="1"/>
</dbReference>
<dbReference type="FunFam" id="1.20.120.80:FF:000002">
    <property type="entry name" value="Cytochrome c oxidase subunit 3"/>
    <property type="match status" value="1"/>
</dbReference>
<dbReference type="Gene3D" id="1.10.287.70">
    <property type="match status" value="1"/>
</dbReference>
<dbReference type="Gene3D" id="1.20.120.80">
    <property type="entry name" value="Cytochrome c oxidase, subunit III, four-helix bundle"/>
    <property type="match status" value="1"/>
</dbReference>
<dbReference type="InterPro" id="IPR024791">
    <property type="entry name" value="Cyt_c/ubiquinol_Oxase_su3"/>
</dbReference>
<dbReference type="InterPro" id="IPR033945">
    <property type="entry name" value="Cyt_c_oxase_su3_dom"/>
</dbReference>
<dbReference type="InterPro" id="IPR000298">
    <property type="entry name" value="Cyt_c_oxidase-like_su3"/>
</dbReference>
<dbReference type="InterPro" id="IPR035973">
    <property type="entry name" value="Cyt_c_oxidase_su3-like_sf"/>
</dbReference>
<dbReference type="InterPro" id="IPR013833">
    <property type="entry name" value="Cyt_c_oxidase_su3_a-hlx"/>
</dbReference>
<dbReference type="PANTHER" id="PTHR11403:SF7">
    <property type="entry name" value="CYTOCHROME C OXIDASE SUBUNIT 3"/>
    <property type="match status" value="1"/>
</dbReference>
<dbReference type="PANTHER" id="PTHR11403">
    <property type="entry name" value="CYTOCHROME C OXIDASE SUBUNIT III"/>
    <property type="match status" value="1"/>
</dbReference>
<dbReference type="Pfam" id="PF00510">
    <property type="entry name" value="COX3"/>
    <property type="match status" value="1"/>
</dbReference>
<dbReference type="SUPFAM" id="SSF81452">
    <property type="entry name" value="Cytochrome c oxidase subunit III-like"/>
    <property type="match status" value="1"/>
</dbReference>
<dbReference type="PROSITE" id="PS50253">
    <property type="entry name" value="COX3"/>
    <property type="match status" value="1"/>
</dbReference>
<comment type="function">
    <text evidence="2">Component of the cytochrome c oxidase, the last enzyme in the mitochondrial electron transport chain which drives oxidative phosphorylation. The respiratory chain contains 3 multisubunit complexes succinate dehydrogenase (complex II, CII), ubiquinol-cytochrome c oxidoreductase (cytochrome b-c1 complex, complex III, CIII) and cytochrome c oxidase (complex IV, CIV), that cooperate to transfer electrons derived from NADH and succinate to molecular oxygen, creating an electrochemical gradient over the inner membrane that drives transmembrane transport and the ATP synthase. Cytochrome c oxidase is the component of the respiratory chain that catalyzes the reduction of oxygen to water. Electrons originating from reduced cytochrome c in the intermembrane space (IMS) are transferred via the dinuclear copper A center (CU(A)) of subunit 2 and heme A of subunit 1 to the active site in subunit 1, a binuclear center (BNC) formed by heme A3 and copper B (CU(B)). The BNC reduces molecular oxygen to 2 water molecules using 4 electrons from cytochrome c in the IMS and 4 protons from the mitochondrial matrix.</text>
</comment>
<comment type="catalytic activity">
    <reaction evidence="2">
        <text>4 Fe(II)-[cytochrome c] + O2 + 8 H(+)(in) = 4 Fe(III)-[cytochrome c] + 2 H2O + 4 H(+)(out)</text>
        <dbReference type="Rhea" id="RHEA:11436"/>
        <dbReference type="Rhea" id="RHEA-COMP:10350"/>
        <dbReference type="Rhea" id="RHEA-COMP:14399"/>
        <dbReference type="ChEBI" id="CHEBI:15377"/>
        <dbReference type="ChEBI" id="CHEBI:15378"/>
        <dbReference type="ChEBI" id="CHEBI:15379"/>
        <dbReference type="ChEBI" id="CHEBI:29033"/>
        <dbReference type="ChEBI" id="CHEBI:29034"/>
        <dbReference type="EC" id="7.1.1.9"/>
    </reaction>
    <physiologicalReaction direction="left-to-right" evidence="2">
        <dbReference type="Rhea" id="RHEA:11437"/>
    </physiologicalReaction>
</comment>
<comment type="subunit">
    <text evidence="1">Component of the cytochrome c oxidase (complex IV, CIV), a multisubunit enzyme composed of 14 subunits. The complex is composed of a catalytic core of 3 subunits MT-CO1, MT-CO2 and MT-CO3, encoded in the mitochondrial DNA, and 11 supernumerary subunits COX4I, COX5A, COX5B, COX6A, COX6B, COX6C, COX7A, COX7B, COX7C, COX8 and NDUFA4, which are encoded in the nuclear genome. The complex exists as a monomer or a dimer and forms supercomplexes (SCs) in the inner mitochondrial membrane with NADH-ubiquinone oxidoreductase (complex I, CI) and ubiquinol-cytochrome c oxidoreductase (cytochrome b-c1 complex, complex III, CIII), resulting in different assemblies (supercomplex SCI(1)III(2)IV(1) and megacomplex MCI(2)III(2)IV(2)).</text>
</comment>
<comment type="subcellular location">
    <subcellularLocation>
        <location evidence="1">Mitochondrion inner membrane</location>
        <topology evidence="1">Multi-pass membrane protein</topology>
    </subcellularLocation>
</comment>
<comment type="similarity">
    <text evidence="3">Belongs to the cytochrome c oxidase subunit 3 family.</text>
</comment>
<sequence length="261" mass="29891">MTHQTHAYHMVNPSPWPLTGALSALLMTSGLIMWFHFNSMTLLMLGLTTNMLTMYQWWRDIIRESTFQGHHTSAVQKGLRYGMILFIISEVLFFTGFFWAFYHSSLAPTPELGGCWPPTGIHPLNPLEVPLLNTSVLLASGVSITWAHHSLMEGNRNHMLQALFITIALGVYFTLLQASEYYEAPFTISDGVYGSTFFVATGFHGLHVIIGSTFLIVCFFRQLKFHFTSTHHFGFEAAAWYWHFVDVVWLFLYVSIYWWGS</sequence>
<reference key="1">
    <citation type="journal article" date="1999" name="Mol. Phylogenet. Evol.">
        <title>Phylogenetic relationships in the bovid subfamily Antilopinae based on mitochondrial DNA sequences.</title>
        <authorList>
            <person name="Rebholz W.E.R."/>
            <person name="Harley E.H."/>
        </authorList>
    </citation>
    <scope>NUCLEOTIDE SEQUENCE [GENOMIC DNA]</scope>
</reference>
<feature type="chain" id="PRO_0000183763" description="Cytochrome c oxidase subunit 3">
    <location>
        <begin position="1"/>
        <end position="261"/>
    </location>
</feature>
<feature type="topological domain" description="Mitochondrial matrix" evidence="1">
    <location>
        <begin position="1"/>
        <end position="15"/>
    </location>
</feature>
<feature type="transmembrane region" description="Helical; Name=I" evidence="1">
    <location>
        <begin position="16"/>
        <end position="34"/>
    </location>
</feature>
<feature type="topological domain" description="Mitochondrial intermembrane" evidence="1">
    <location>
        <begin position="35"/>
        <end position="40"/>
    </location>
</feature>
<feature type="transmembrane region" description="Helical; Name=II" evidence="1">
    <location>
        <begin position="41"/>
        <end position="66"/>
    </location>
</feature>
<feature type="topological domain" description="Mitochondrial matrix" evidence="1">
    <location>
        <begin position="67"/>
        <end position="72"/>
    </location>
</feature>
<feature type="transmembrane region" description="Helical; Name=III" evidence="1">
    <location>
        <begin position="73"/>
        <end position="105"/>
    </location>
</feature>
<feature type="topological domain" description="Mitochondrial intermembrane" evidence="1">
    <location>
        <begin position="106"/>
        <end position="128"/>
    </location>
</feature>
<feature type="transmembrane region" description="Helical; Name=IV" evidence="1">
    <location>
        <begin position="129"/>
        <end position="152"/>
    </location>
</feature>
<feature type="topological domain" description="Mitochondrial matrix" evidence="1">
    <location>
        <begin position="153"/>
        <end position="155"/>
    </location>
</feature>
<feature type="transmembrane region" description="Helical; Name=V" evidence="1">
    <location>
        <begin position="156"/>
        <end position="183"/>
    </location>
</feature>
<feature type="topological domain" description="Mitochondrial intermembrane" evidence="1">
    <location>
        <begin position="184"/>
        <end position="190"/>
    </location>
</feature>
<feature type="transmembrane region" description="Helical; Name=VI" evidence="1">
    <location>
        <begin position="191"/>
        <end position="223"/>
    </location>
</feature>
<feature type="topological domain" description="Mitochondrial matrix" evidence="1">
    <location>
        <begin position="224"/>
        <end position="232"/>
    </location>
</feature>
<feature type="transmembrane region" description="Helical; Name=VII" evidence="1">
    <location>
        <begin position="233"/>
        <end position="256"/>
    </location>
</feature>
<feature type="topological domain" description="Mitochondrial intermembrane" evidence="1">
    <location>
        <begin position="257"/>
        <end position="261"/>
    </location>
</feature>
<keyword id="KW-0472">Membrane</keyword>
<keyword id="KW-0496">Mitochondrion</keyword>
<keyword id="KW-0999">Mitochondrion inner membrane</keyword>
<keyword id="KW-1278">Translocase</keyword>
<keyword id="KW-0812">Transmembrane</keyword>
<keyword id="KW-1133">Transmembrane helix</keyword>
<organism>
    <name type="scientific">Damaliscus lunatus</name>
    <name type="common">Tsessebe</name>
    <name type="synonym">Topi</name>
    <dbReference type="NCBI Taxonomy" id="9929"/>
    <lineage>
        <taxon>Eukaryota</taxon>
        <taxon>Metazoa</taxon>
        <taxon>Chordata</taxon>
        <taxon>Craniata</taxon>
        <taxon>Vertebrata</taxon>
        <taxon>Euteleostomi</taxon>
        <taxon>Mammalia</taxon>
        <taxon>Eutheria</taxon>
        <taxon>Laurasiatheria</taxon>
        <taxon>Artiodactyla</taxon>
        <taxon>Ruminantia</taxon>
        <taxon>Pecora</taxon>
        <taxon>Bovidae</taxon>
        <taxon>Alcelaphinae</taxon>
        <taxon>Damaliscus</taxon>
    </lineage>
</organism>
<protein>
    <recommendedName>
        <fullName>Cytochrome c oxidase subunit 3</fullName>
        <ecNumber>7.1.1.9</ecNumber>
    </recommendedName>
    <alternativeName>
        <fullName>Cytochrome c oxidase polypeptide III</fullName>
    </alternativeName>
</protein>